<sequence length="1226" mass="138397">MGYPPPTRRLGDKKRYHYSNNPNRRHPSAVYSKNSFPKSSNNGFVSSPTADNSTNPSVTPSTASVPLPTAAPGSTFGIEAPRPSRYDPSSVSRPSSSSYSSTRKIGSRYNPDVERSSSTTSSTPESMNTSTITHTNTDIGNSRYSRKTMSRYNPQSTSSTNVTHFPSALSNAPPFYVANGSSRRPRSMDDYSPDVTNKLETNNVSSVNNNSPHSYYSRSNKWRSIGTPSRPPFDNHVGNMTTTSNTNSIHQREPFWKANSTTILKSTHSQSSPSLHTKKFHDANKLDKPEASVKVETPSKDETKAISYHDNNFPPRKSVSKPNAPLEPDNIKVGEEDALGKKEVHKSGREIAKEHPTPVKMKEHDELEARAKKVSKINIDGKQDEIWTTAKTVASAVEVSKESQKELTRSVERKESPEIRDYERAYDPKALKTDVTKLTVDNDNKSYEEPLEKVEGCIFPLPKAETRLWELKNQKRNKIISEQKYLLKKAIRNFSEYPFYAQNKLIHQQATGLILTKIISKIKKEEHLKKINLKHDYFDLQKKYEKECEILTKLSENLRKEEIENKRKEHELMEQKRREEGIETEKEKSLRHPSSSSSSRRRNRADFVDDAEMENVLLQIDPNYKHYQAAATIPPLILDPIRKHSYKFCDVNNLVTDKKLWASRILKDASDNFTDHEHSLFLEGYLIHPKKFGKISHYMGGLRSPEECVLHYYRTKKTVNYKQLLIDKNKKRKMSAAAKRRKRKERSNDEEVEVDESKEESTNTIEKEEKSENNAEENVQPVLVQGSEVKGDPLGTPEKVENMIEQRGEEFAGELENAERVNDLKRAHDEVGEESNKSSVIETNNGVQIMDPKGAVQNGYYPEETKELDFSLENALQRKKHKSAPEHKTSYWSVRESQLFPELLKEFGSQWSLISEKLGTKSTTMVRNYYQRNAARNGWKLLVDETDLKRDGTSSESVQQSQILIQPERPNINAYSNIPPQQRPALGYFVGQPTHGHNTSISSIDGSIRPFGPDFHRDTFSKISAPLTTLPPPRLPSIQFPRSEMAEPTVTDLRNRPLDHIDTLADAASSVTNNQNFSNERNAIDIGRKSTTISNLLNNSDRSMKSSFQSASRHEAQLEDTPSMNNIVVQEIKPNITTPRSSSISALLNPVNGNGQSNPDGRPLLPFQHAISQGTPTFPLPAPRTSPISRAPPKFNFSNDPLAALAAVASAPDAMSSFLSKKENNN</sequence>
<proteinExistence type="evidence at protein level"/>
<name>SNT1_YEAST</name>
<comment type="function">
    <text>Part of the Set3C complex, which is required to repress early/middle sporulation genes during meiosis.</text>
</comment>
<comment type="subunit">
    <text evidence="5">Identified in a Set3C complex with SET3, HST1, HOS2, SIF2, CPR1 and HOS4.</text>
</comment>
<comment type="subcellular location">
    <subcellularLocation>
        <location evidence="7">Nucleus</location>
    </subcellularLocation>
</comment>
<comment type="miscellaneous">
    <text evidence="6">Present with 396 molecules/cell in log phase SD medium.</text>
</comment>
<feature type="chain" id="PRO_0000197122" description="Probable DNA-binding protein SNT1">
    <location>
        <begin position="1"/>
        <end position="1226"/>
    </location>
</feature>
<feature type="domain" description="SANT" evidence="2">
    <location>
        <begin position="668"/>
        <end position="720"/>
    </location>
</feature>
<feature type="domain" description="HTH myb-type" evidence="3">
    <location>
        <begin position="884"/>
        <end position="938"/>
    </location>
</feature>
<feature type="DNA-binding region" description="H-T-H motif" evidence="3">
    <location>
        <begin position="911"/>
        <end position="934"/>
    </location>
</feature>
<feature type="region of interest" description="Disordered" evidence="4">
    <location>
        <begin position="1"/>
        <end position="219"/>
    </location>
</feature>
<feature type="region of interest" description="Disordered" evidence="4">
    <location>
        <begin position="264"/>
        <end position="331"/>
    </location>
</feature>
<feature type="region of interest" description="Disordered" evidence="4">
    <location>
        <begin position="569"/>
        <end position="605"/>
    </location>
</feature>
<feature type="region of interest" description="Disordered" evidence="4">
    <location>
        <begin position="732"/>
        <end position="796"/>
    </location>
</feature>
<feature type="region of interest" description="Disordered" evidence="4">
    <location>
        <begin position="1172"/>
        <end position="1194"/>
    </location>
</feature>
<feature type="coiled-coil region" evidence="1">
    <location>
        <begin position="539"/>
        <end position="591"/>
    </location>
</feature>
<feature type="compositionally biased region" description="Basic residues" evidence="4">
    <location>
        <begin position="11"/>
        <end position="27"/>
    </location>
</feature>
<feature type="compositionally biased region" description="Polar residues" evidence="4">
    <location>
        <begin position="31"/>
        <end position="64"/>
    </location>
</feature>
<feature type="compositionally biased region" description="Low complexity" evidence="4">
    <location>
        <begin position="81"/>
        <end position="103"/>
    </location>
</feature>
<feature type="compositionally biased region" description="Low complexity" evidence="4">
    <location>
        <begin position="116"/>
        <end position="131"/>
    </location>
</feature>
<feature type="compositionally biased region" description="Polar residues" evidence="4">
    <location>
        <begin position="132"/>
        <end position="143"/>
    </location>
</feature>
<feature type="compositionally biased region" description="Polar residues" evidence="4">
    <location>
        <begin position="150"/>
        <end position="170"/>
    </location>
</feature>
<feature type="compositionally biased region" description="Low complexity" evidence="4">
    <location>
        <begin position="202"/>
        <end position="211"/>
    </location>
</feature>
<feature type="compositionally biased region" description="Polar residues" evidence="4">
    <location>
        <begin position="264"/>
        <end position="275"/>
    </location>
</feature>
<feature type="compositionally biased region" description="Basic and acidic residues" evidence="4">
    <location>
        <begin position="280"/>
        <end position="304"/>
    </location>
</feature>
<feature type="compositionally biased region" description="Basic and acidic residues" evidence="4">
    <location>
        <begin position="569"/>
        <end position="590"/>
    </location>
</feature>
<feature type="compositionally biased region" description="Basic residues" evidence="4">
    <location>
        <begin position="732"/>
        <end position="745"/>
    </location>
</feature>
<feature type="compositionally biased region" description="Acidic residues" evidence="4">
    <location>
        <begin position="748"/>
        <end position="758"/>
    </location>
</feature>
<feature type="compositionally biased region" description="Basic and acidic residues" evidence="4">
    <location>
        <begin position="759"/>
        <end position="773"/>
    </location>
</feature>
<feature type="modified residue" description="Phosphoserine" evidence="8">
    <location>
        <position position="187"/>
    </location>
</feature>
<feature type="modified residue" description="Phosphoserine" evidence="8">
    <location>
        <position position="395"/>
    </location>
</feature>
<feature type="modified residue" description="Phosphothreonine" evidence="8 9">
    <location>
        <position position="796"/>
    </location>
</feature>
<feature type="modified residue" description="Phosphoserine" evidence="8">
    <location>
        <position position="1037"/>
    </location>
</feature>
<feature type="sequence conflict" description="In Ref. 2; CAA41799." evidence="7" ref="2">
    <original>A</original>
    <variation>T</variation>
    <location>
        <position position="305"/>
    </location>
</feature>
<feature type="sequence conflict" description="In Ref. 2; CAA41799." evidence="7" ref="2">
    <original>S</original>
    <variation>N</variation>
    <location>
        <position position="375"/>
    </location>
</feature>
<feature type="sequence conflict" description="In Ref. 2; CAA41799." evidence="7" ref="2">
    <original>Q</original>
    <variation>H</variation>
    <location>
        <position position="404"/>
    </location>
</feature>
<feature type="sequence conflict" description="In Ref. 2; CAA41799." evidence="7" ref="2">
    <original>V</original>
    <variation>A</variation>
    <location>
        <position position="435"/>
    </location>
</feature>
<feature type="sequence conflict" description="In Ref. 2; CAA41799." evidence="7" ref="2">
    <original>N</original>
    <variation>D</variation>
    <location>
        <position position="442"/>
    </location>
</feature>
<feature type="sequence conflict" description="In Ref. 2; CAA41799." evidence="7" ref="2">
    <original>E</original>
    <variation>K</variation>
    <location>
        <position position="482"/>
    </location>
</feature>
<feature type="sequence conflict" description="In Ref. 1; AAB21259." evidence="7" ref="1">
    <original>L</original>
    <variation>V</variation>
    <location>
        <position position="513"/>
    </location>
</feature>
<feature type="sequence conflict" description="In Ref. 2; CAA41799." evidence="7" ref="2">
    <original>H</original>
    <variation>Y</variation>
    <location>
        <position position="644"/>
    </location>
</feature>
<feature type="sequence conflict" description="In Ref. 2; CAA41799." evidence="7" ref="2">
    <original>E</original>
    <variation>D</variation>
    <location>
        <position position="766"/>
    </location>
</feature>
<feature type="sequence conflict" description="In Ref. 2; CAA41799." evidence="7" ref="2">
    <original>Q</original>
    <variation>K</variation>
    <location>
        <position position="806"/>
    </location>
</feature>
<feature type="sequence conflict" description="In Ref. 2; CAA41799." evidence="7" ref="2">
    <original>V</original>
    <variation>I</variation>
    <location>
        <position position="831"/>
    </location>
</feature>
<feature type="sequence conflict" description="In Ref. 2; CAA41799." evidence="7" ref="2">
    <original>G</original>
    <variation>E</variation>
    <location>
        <position position="846"/>
    </location>
</feature>
<feature type="sequence conflict" description="In Ref. 2; CAA41799." evidence="7" ref="2">
    <original>D</original>
    <variation>A</variation>
    <location>
        <position position="851"/>
    </location>
</feature>
<feature type="sequence conflict" description="In Ref. 2; CAA41799." evidence="7" ref="2">
    <original>AVQ</original>
    <variation>GVR</variation>
    <location>
        <begin position="855"/>
        <end position="857"/>
    </location>
</feature>
<accession>P25357</accession>
<accession>D6VR43</accession>
<accession>Q02397</accession>
<accession>Q8NIL8</accession>
<organism>
    <name type="scientific">Saccharomyces cerevisiae (strain ATCC 204508 / S288c)</name>
    <name type="common">Baker's yeast</name>
    <dbReference type="NCBI Taxonomy" id="559292"/>
    <lineage>
        <taxon>Eukaryota</taxon>
        <taxon>Fungi</taxon>
        <taxon>Dikarya</taxon>
        <taxon>Ascomycota</taxon>
        <taxon>Saccharomycotina</taxon>
        <taxon>Saccharomycetes</taxon>
        <taxon>Saccharomycetales</taxon>
        <taxon>Saccharomycetaceae</taxon>
        <taxon>Saccharomyces</taxon>
    </lineage>
</organism>
<evidence type="ECO:0000255" key="1"/>
<evidence type="ECO:0000255" key="2">
    <source>
        <dbReference type="PROSITE-ProRule" id="PRU00624"/>
    </source>
</evidence>
<evidence type="ECO:0000255" key="3">
    <source>
        <dbReference type="PROSITE-ProRule" id="PRU00625"/>
    </source>
</evidence>
<evidence type="ECO:0000256" key="4">
    <source>
        <dbReference type="SAM" id="MobiDB-lite"/>
    </source>
</evidence>
<evidence type="ECO:0000269" key="5">
    <source>
    </source>
</evidence>
<evidence type="ECO:0000269" key="6">
    <source>
    </source>
</evidence>
<evidence type="ECO:0000305" key="7"/>
<evidence type="ECO:0007744" key="8">
    <source>
    </source>
</evidence>
<evidence type="ECO:0007744" key="9">
    <source>
    </source>
</evidence>
<reference key="1">
    <citation type="journal article" date="1991" name="Yeast">
        <title>The complete sequence of a 7.5 kb region of chromosome III from Saccharomyces cerevisiae that lies between CRY1 and MAT.</title>
        <authorList>
            <person name="Wicksteed B.L."/>
            <person name="Roberts A.B."/>
            <person name="Sagliocco F.A."/>
            <person name="Brown A.J.P."/>
        </authorList>
    </citation>
    <scope>NUCLEOTIDE SEQUENCE [GENOMIC DNA]</scope>
</reference>
<reference key="2">
    <citation type="journal article" date="1991" name="Yeast">
        <title>The complete sequence of the unit YCR59, situated between CRY1 and MAT, reveals two long open reading frames, which cover 91% of the 10.1 kb segment.</title>
        <authorList>
            <person name="Jia Y."/>
            <person name="Slonimski P.P."/>
            <person name="Herbert C.J."/>
        </authorList>
    </citation>
    <scope>NUCLEOTIDE SEQUENCE [GENOMIC DNA]</scope>
</reference>
<reference key="3">
    <citation type="journal article" date="1992" name="Nature">
        <title>The complete DNA sequence of yeast chromosome III.</title>
        <authorList>
            <person name="Oliver S.G."/>
            <person name="van der Aart Q.J.M."/>
            <person name="Agostoni-Carbone M.L."/>
            <person name="Aigle M."/>
            <person name="Alberghina L."/>
            <person name="Alexandraki D."/>
            <person name="Antoine G."/>
            <person name="Anwar R."/>
            <person name="Ballesta J.P.G."/>
            <person name="Benit P."/>
            <person name="Berben G."/>
            <person name="Bergantino E."/>
            <person name="Biteau N."/>
            <person name="Bolle P.-A."/>
            <person name="Bolotin-Fukuhara M."/>
            <person name="Brown A."/>
            <person name="Brown A.J.P."/>
            <person name="Buhler J.-M."/>
            <person name="Carcano C."/>
            <person name="Carignani G."/>
            <person name="Cederberg H."/>
            <person name="Chanet R."/>
            <person name="Contreras R."/>
            <person name="Crouzet M."/>
            <person name="Daignan-Fornier B."/>
            <person name="Defoor E."/>
            <person name="Delgado M.D."/>
            <person name="Demolder J."/>
            <person name="Doira C."/>
            <person name="Dubois E."/>
            <person name="Dujon B."/>
            <person name="Duesterhoeft A."/>
            <person name="Erdmann D."/>
            <person name="Esteban M."/>
            <person name="Fabre F."/>
            <person name="Fairhead C."/>
            <person name="Faye G."/>
            <person name="Feldmann H."/>
            <person name="Fiers W."/>
            <person name="Francingues-Gaillard M.-C."/>
            <person name="Franco L."/>
            <person name="Frontali L."/>
            <person name="Fukuhara H."/>
            <person name="Fuller L.J."/>
            <person name="Galland P."/>
            <person name="Gent M.E."/>
            <person name="Gigot D."/>
            <person name="Gilliquet V."/>
            <person name="Glansdorff N."/>
            <person name="Goffeau A."/>
            <person name="Grenson M."/>
            <person name="Grisanti P."/>
            <person name="Grivell L.A."/>
            <person name="de Haan M."/>
            <person name="Haasemann M."/>
            <person name="Hatat D."/>
            <person name="Hoenicka J."/>
            <person name="Hegemann J.H."/>
            <person name="Herbert C.J."/>
            <person name="Hilger F."/>
            <person name="Hohmann S."/>
            <person name="Hollenberg C.P."/>
            <person name="Huse K."/>
            <person name="Iborra F."/>
            <person name="Indge K.J."/>
            <person name="Isono K."/>
            <person name="Jacq C."/>
            <person name="Jacquet M."/>
            <person name="James C.M."/>
            <person name="Jauniaux J.-C."/>
            <person name="Jia Y."/>
            <person name="Jimenez A."/>
            <person name="Kelly A."/>
            <person name="Kleinhans U."/>
            <person name="Kreisl P."/>
            <person name="Lanfranchi G."/>
            <person name="Lewis C."/>
            <person name="van der Linden C.G."/>
            <person name="Lucchini G."/>
            <person name="Lutzenkirchen K."/>
            <person name="Maat M.J."/>
            <person name="Mallet L."/>
            <person name="Mannhaupt G."/>
            <person name="Martegani E."/>
            <person name="Mathieu A."/>
            <person name="Maurer C.T.C."/>
            <person name="McConnell D."/>
            <person name="McKee R.A."/>
            <person name="Messenguy F."/>
            <person name="Mewes H.-W."/>
            <person name="Molemans F."/>
            <person name="Montague M.A."/>
            <person name="Muzi Falconi M."/>
            <person name="Navas L."/>
            <person name="Newlon C.S."/>
            <person name="Noone D."/>
            <person name="Pallier C."/>
            <person name="Panzeri L."/>
            <person name="Pearson B.M."/>
            <person name="Perea J."/>
            <person name="Philippsen P."/>
            <person name="Pierard A."/>
            <person name="Planta R.J."/>
            <person name="Plevani P."/>
            <person name="Poetsch B."/>
            <person name="Pohl F.M."/>
            <person name="Purnelle B."/>
            <person name="Ramezani Rad M."/>
            <person name="Rasmussen S.W."/>
            <person name="Raynal A."/>
            <person name="Remacha M.A."/>
            <person name="Richterich P."/>
            <person name="Roberts A.B."/>
            <person name="Rodriguez F."/>
            <person name="Sanz E."/>
            <person name="Schaaff-Gerstenschlaeger I."/>
            <person name="Scherens B."/>
            <person name="Schweitzer B."/>
            <person name="Shu Y."/>
            <person name="Skala J."/>
            <person name="Slonimski P.P."/>
            <person name="Sor F."/>
            <person name="Soustelle C."/>
            <person name="Spiegelberg R."/>
            <person name="Stateva L.I."/>
            <person name="Steensma H.Y."/>
            <person name="Steiner S."/>
            <person name="Thierry A."/>
            <person name="Thireos G."/>
            <person name="Tzermia M."/>
            <person name="Urrestarazu L.A."/>
            <person name="Valle G."/>
            <person name="Vetter I."/>
            <person name="van Vliet-Reedijk J.C."/>
            <person name="Voet M."/>
            <person name="Volckaert G."/>
            <person name="Vreken P."/>
            <person name="Wang H."/>
            <person name="Warmington J.R."/>
            <person name="von Wettstein D."/>
            <person name="Wicksteed B.L."/>
            <person name="Wilson C."/>
            <person name="Wurst H."/>
            <person name="Xu G."/>
            <person name="Yoshikawa A."/>
            <person name="Zimmermann F.K."/>
            <person name="Sgouros J.G."/>
        </authorList>
    </citation>
    <scope>NUCLEOTIDE SEQUENCE [LARGE SCALE GENOMIC DNA]</scope>
    <source>
        <strain>ATCC 204508 / S288c</strain>
    </source>
</reference>
<reference key="4">
    <citation type="submission" date="2001-06" db="EMBL/GenBank/DDBJ databases">
        <authorList>
            <person name="Valles G."/>
            <person name="Volckaerts G."/>
        </authorList>
    </citation>
    <scope>SEQUENCE REVISION</scope>
</reference>
<reference key="5">
    <citation type="journal article" date="2014" name="G3 (Bethesda)">
        <title>The reference genome sequence of Saccharomyces cerevisiae: Then and now.</title>
        <authorList>
            <person name="Engel S.R."/>
            <person name="Dietrich F.S."/>
            <person name="Fisk D.G."/>
            <person name="Binkley G."/>
            <person name="Balakrishnan R."/>
            <person name="Costanzo M.C."/>
            <person name="Dwight S.S."/>
            <person name="Hitz B.C."/>
            <person name="Karra K."/>
            <person name="Nash R.S."/>
            <person name="Weng S."/>
            <person name="Wong E.D."/>
            <person name="Lloyd P."/>
            <person name="Skrzypek M.S."/>
            <person name="Miyasato S.R."/>
            <person name="Simison M."/>
            <person name="Cherry J.M."/>
        </authorList>
    </citation>
    <scope>GENOME REANNOTATION</scope>
    <source>
        <strain>ATCC 204508 / S288c</strain>
    </source>
</reference>
<reference key="6">
    <citation type="journal article" date="2001" name="Genes Dev.">
        <title>The S. cerevisiae SET3 complex includes two histone deacetylases, Hos2 and Hst1, and is a meiotic-specific repressor of the sporulation gene program.</title>
        <authorList>
            <person name="Pijnappel W.W.M.P."/>
            <person name="Schaft D."/>
            <person name="Roguev A."/>
            <person name="Shevchenko A."/>
            <person name="Tekotte H."/>
            <person name="Wilm M."/>
            <person name="Rigaut G."/>
            <person name="Seraphin B."/>
            <person name="Aasland R."/>
            <person name="Stewart A.F."/>
        </authorList>
    </citation>
    <scope>IDENTIFICATION IN A COMPLEX WITH SET3; HST1; HOS2; SIF2; CPR1 AND HOS4</scope>
</reference>
<reference key="7">
    <citation type="journal article" date="2003" name="Nature">
        <title>Global analysis of protein expression in yeast.</title>
        <authorList>
            <person name="Ghaemmaghami S."/>
            <person name="Huh W.-K."/>
            <person name="Bower K."/>
            <person name="Howson R.W."/>
            <person name="Belle A."/>
            <person name="Dephoure N."/>
            <person name="O'Shea E.K."/>
            <person name="Weissman J.S."/>
        </authorList>
    </citation>
    <scope>LEVEL OF PROTEIN EXPRESSION [LARGE SCALE ANALYSIS]</scope>
</reference>
<reference key="8">
    <citation type="journal article" date="2008" name="Mol. Cell. Proteomics">
        <title>A multidimensional chromatography technology for in-depth phosphoproteome analysis.</title>
        <authorList>
            <person name="Albuquerque C.P."/>
            <person name="Smolka M.B."/>
            <person name="Payne S.H."/>
            <person name="Bafna V."/>
            <person name="Eng J."/>
            <person name="Zhou H."/>
        </authorList>
    </citation>
    <scope>PHOSPHORYLATION [LARGE SCALE ANALYSIS] AT SER-187; SER-395; THR-796 AND SER-1037</scope>
    <scope>IDENTIFICATION BY MASS SPECTROMETRY [LARGE SCALE ANALYSIS]</scope>
</reference>
<reference key="9">
    <citation type="journal article" date="2009" name="Science">
        <title>Global analysis of Cdk1 substrate phosphorylation sites provides insights into evolution.</title>
        <authorList>
            <person name="Holt L.J."/>
            <person name="Tuch B.B."/>
            <person name="Villen J."/>
            <person name="Johnson A.D."/>
            <person name="Gygi S.P."/>
            <person name="Morgan D.O."/>
        </authorList>
    </citation>
    <scope>PHOSPHORYLATION [LARGE SCALE ANALYSIS] AT THR-796</scope>
    <scope>IDENTIFICATION BY MASS SPECTROMETRY [LARGE SCALE ANALYSIS]</scope>
</reference>
<keyword id="KW-0175">Coiled coil</keyword>
<keyword id="KW-0238">DNA-binding</keyword>
<keyword id="KW-0539">Nucleus</keyword>
<keyword id="KW-0597">Phosphoprotein</keyword>
<keyword id="KW-1185">Reference proteome</keyword>
<keyword id="KW-0677">Repeat</keyword>
<protein>
    <recommendedName>
        <fullName>Probable DNA-binding protein SNT1</fullName>
    </recommendedName>
    <alternativeName>
        <fullName>SANT domain-containing protein 1</fullName>
    </alternativeName>
</protein>
<dbReference type="EMBL" id="S78624">
    <property type="protein sequence ID" value="AAB21259.1"/>
    <property type="molecule type" value="Genomic_DNA"/>
</dbReference>
<dbReference type="EMBL" id="X59075">
    <property type="protein sequence ID" value="CAA41799.1"/>
    <property type="molecule type" value="Genomic_DNA"/>
</dbReference>
<dbReference type="EMBL" id="X59720">
    <property type="protein sequence ID" value="CAC42983.1"/>
    <property type="molecule type" value="Genomic_DNA"/>
</dbReference>
<dbReference type="EMBL" id="BK006937">
    <property type="protein sequence ID" value="DAA07512.1"/>
    <property type="molecule type" value="Genomic_DNA"/>
</dbReference>
<dbReference type="PIR" id="S15053">
    <property type="entry name" value="S15053"/>
</dbReference>
<dbReference type="RefSeq" id="NP_009962.2">
    <property type="nucleotide sequence ID" value="NM_001178747.1"/>
</dbReference>
<dbReference type="SMR" id="P25357"/>
<dbReference type="BioGRID" id="31016">
    <property type="interactions" value="684"/>
</dbReference>
<dbReference type="ComplexPortal" id="CPX-1342">
    <property type="entry name" value="SET3C histone deacetylase complex"/>
</dbReference>
<dbReference type="DIP" id="DIP-2082N"/>
<dbReference type="FunCoup" id="P25357">
    <property type="interactions" value="204"/>
</dbReference>
<dbReference type="IntAct" id="P25357">
    <property type="interactions" value="15"/>
</dbReference>
<dbReference type="MINT" id="P25357"/>
<dbReference type="STRING" id="4932.YCR033W"/>
<dbReference type="GlyGen" id="P25357">
    <property type="glycosylation" value="3 sites, 1 O-linked glycan (2 sites)"/>
</dbReference>
<dbReference type="iPTMnet" id="P25357"/>
<dbReference type="PaxDb" id="4932-YCR033W"/>
<dbReference type="PeptideAtlas" id="P25357"/>
<dbReference type="EnsemblFungi" id="YCR033W_mRNA">
    <property type="protein sequence ID" value="YCR033W"/>
    <property type="gene ID" value="YCR033W"/>
</dbReference>
<dbReference type="GeneID" id="850399"/>
<dbReference type="KEGG" id="sce:YCR033W"/>
<dbReference type="AGR" id="SGD:S000000629"/>
<dbReference type="SGD" id="S000000629">
    <property type="gene designation" value="SNT1"/>
</dbReference>
<dbReference type="VEuPathDB" id="FungiDB:YCR033W"/>
<dbReference type="eggNOG" id="KOG1878">
    <property type="taxonomic scope" value="Eukaryota"/>
</dbReference>
<dbReference type="GeneTree" id="ENSGT00940000175552"/>
<dbReference type="HOGENOM" id="CLU_004864_0_0_1"/>
<dbReference type="InParanoid" id="P25357"/>
<dbReference type="OMA" id="NTHCHIL"/>
<dbReference type="OrthoDB" id="10258692at2759"/>
<dbReference type="BioCyc" id="YEAST:G3O-29347-MONOMER"/>
<dbReference type="Reactome" id="R-SCE-3214815">
    <property type="pathway name" value="HDACs deacetylate histones"/>
</dbReference>
<dbReference type="Reactome" id="R-SCE-383280">
    <property type="pathway name" value="Nuclear Receptor transcription pathway"/>
</dbReference>
<dbReference type="BioGRID-ORCS" id="850399">
    <property type="hits" value="10 hits in 10 CRISPR screens"/>
</dbReference>
<dbReference type="PRO" id="PR:P25357"/>
<dbReference type="Proteomes" id="UP000002311">
    <property type="component" value="Chromosome III"/>
</dbReference>
<dbReference type="RNAct" id="P25357">
    <property type="molecule type" value="protein"/>
</dbReference>
<dbReference type="GO" id="GO:0000785">
    <property type="term" value="C:chromatin"/>
    <property type="evidence" value="ECO:0000318"/>
    <property type="project" value="GO_Central"/>
</dbReference>
<dbReference type="GO" id="GO:0005829">
    <property type="term" value="C:cytosol"/>
    <property type="evidence" value="ECO:0000314"/>
    <property type="project" value="SGD"/>
</dbReference>
<dbReference type="GO" id="GO:0000118">
    <property type="term" value="C:histone deacetylase complex"/>
    <property type="evidence" value="ECO:0000314"/>
    <property type="project" value="UniProtKB"/>
</dbReference>
<dbReference type="GO" id="GO:0005634">
    <property type="term" value="C:nucleus"/>
    <property type="evidence" value="ECO:0000314"/>
    <property type="project" value="ComplexPortal"/>
</dbReference>
<dbReference type="GO" id="GO:0070210">
    <property type="term" value="C:Rpd3L-Expanded complex"/>
    <property type="evidence" value="ECO:0007005"/>
    <property type="project" value="SGD"/>
</dbReference>
<dbReference type="GO" id="GO:0034967">
    <property type="term" value="C:Set3 complex"/>
    <property type="evidence" value="ECO:0000314"/>
    <property type="project" value="SGD"/>
</dbReference>
<dbReference type="GO" id="GO:0003677">
    <property type="term" value="F:DNA binding"/>
    <property type="evidence" value="ECO:0000303"/>
    <property type="project" value="UniProtKB"/>
</dbReference>
<dbReference type="GO" id="GO:0009267">
    <property type="term" value="P:cellular response to starvation"/>
    <property type="evidence" value="ECO:0000303"/>
    <property type="project" value="ComplexPortal"/>
</dbReference>
<dbReference type="GO" id="GO:0006974">
    <property type="term" value="P:DNA damage response"/>
    <property type="evidence" value="ECO:0000303"/>
    <property type="project" value="ComplexPortal"/>
</dbReference>
<dbReference type="GO" id="GO:0045835">
    <property type="term" value="P:negative regulation of meiotic nuclear division"/>
    <property type="evidence" value="ECO:0000314"/>
    <property type="project" value="UniProtKB"/>
</dbReference>
<dbReference type="GO" id="GO:0032874">
    <property type="term" value="P:positive regulation of stress-activated MAPK cascade"/>
    <property type="evidence" value="ECO:0000315"/>
    <property type="project" value="SGD"/>
</dbReference>
<dbReference type="GO" id="GO:0006355">
    <property type="term" value="P:regulation of DNA-templated transcription"/>
    <property type="evidence" value="ECO:0000315"/>
    <property type="project" value="SGD"/>
</dbReference>
<dbReference type="GO" id="GO:0006357">
    <property type="term" value="P:regulation of transcription by RNA polymerase II"/>
    <property type="evidence" value="ECO:0000318"/>
    <property type="project" value="GO_Central"/>
</dbReference>
<dbReference type="CDD" id="cd00167">
    <property type="entry name" value="SANT"/>
    <property type="match status" value="2"/>
</dbReference>
<dbReference type="FunFam" id="1.10.10.60:FF:000431">
    <property type="entry name" value="Set3C deacetylase complex subunit"/>
    <property type="match status" value="1"/>
</dbReference>
<dbReference type="FunFam" id="1.10.10.60:FF:000494">
    <property type="entry name" value="Snt1p"/>
    <property type="match status" value="1"/>
</dbReference>
<dbReference type="Gene3D" id="1.10.10.60">
    <property type="entry name" value="Homeodomain-like"/>
    <property type="match status" value="2"/>
</dbReference>
<dbReference type="InterPro" id="IPR009057">
    <property type="entry name" value="Homeodomain-like_sf"/>
</dbReference>
<dbReference type="InterPro" id="IPR017930">
    <property type="entry name" value="Myb_dom"/>
</dbReference>
<dbReference type="InterPro" id="IPR051571">
    <property type="entry name" value="N-CoR_corepressor"/>
</dbReference>
<dbReference type="InterPro" id="IPR001005">
    <property type="entry name" value="SANT/Myb"/>
</dbReference>
<dbReference type="InterPro" id="IPR017884">
    <property type="entry name" value="SANT_dom"/>
</dbReference>
<dbReference type="PANTHER" id="PTHR13992">
    <property type="entry name" value="NUCLEAR RECEPTOR CO-REPRESSOR RELATED NCOR"/>
    <property type="match status" value="1"/>
</dbReference>
<dbReference type="PANTHER" id="PTHR13992:SF39">
    <property type="entry name" value="SMRTER, ISOFORM G"/>
    <property type="match status" value="1"/>
</dbReference>
<dbReference type="Pfam" id="PF00249">
    <property type="entry name" value="Myb_DNA-binding"/>
    <property type="match status" value="2"/>
</dbReference>
<dbReference type="SMART" id="SM00717">
    <property type="entry name" value="SANT"/>
    <property type="match status" value="2"/>
</dbReference>
<dbReference type="SUPFAM" id="SSF46689">
    <property type="entry name" value="Homeodomain-like"/>
    <property type="match status" value="2"/>
</dbReference>
<dbReference type="PROSITE" id="PS51294">
    <property type="entry name" value="HTH_MYB"/>
    <property type="match status" value="1"/>
</dbReference>
<dbReference type="PROSITE" id="PS51293">
    <property type="entry name" value="SANT"/>
    <property type="match status" value="1"/>
</dbReference>
<gene>
    <name type="primary">SNT1</name>
    <name type="ordered locus">YCR033W</name>
    <name type="ORF">YCR33W</name>
    <name type="ORF">YCR592</name>
</gene>